<name>MRAY_ECOHS</name>
<accession>A7ZW39</accession>
<dbReference type="EC" id="2.7.8.13" evidence="1"/>
<dbReference type="EMBL" id="CP000802">
    <property type="protein sequence ID" value="ABV04493.1"/>
    <property type="molecule type" value="Genomic_DNA"/>
</dbReference>
<dbReference type="RefSeq" id="WP_000964131.1">
    <property type="nucleotide sequence ID" value="NC_009800.1"/>
</dbReference>
<dbReference type="SMR" id="A7ZW39"/>
<dbReference type="IntAct" id="A7ZW39">
    <property type="interactions" value="1"/>
</dbReference>
<dbReference type="GeneID" id="93777347"/>
<dbReference type="KEGG" id="ecx:EcHS_A0093"/>
<dbReference type="HOGENOM" id="CLU_023982_0_0_6"/>
<dbReference type="UniPathway" id="UPA00219"/>
<dbReference type="GO" id="GO:0005886">
    <property type="term" value="C:plasma membrane"/>
    <property type="evidence" value="ECO:0007669"/>
    <property type="project" value="UniProtKB-SubCell"/>
</dbReference>
<dbReference type="GO" id="GO:0046872">
    <property type="term" value="F:metal ion binding"/>
    <property type="evidence" value="ECO:0007669"/>
    <property type="project" value="UniProtKB-KW"/>
</dbReference>
<dbReference type="GO" id="GO:0008963">
    <property type="term" value="F:phospho-N-acetylmuramoyl-pentapeptide-transferase activity"/>
    <property type="evidence" value="ECO:0007669"/>
    <property type="project" value="UniProtKB-UniRule"/>
</dbReference>
<dbReference type="GO" id="GO:0051992">
    <property type="term" value="F:UDP-N-acetylmuramoyl-L-alanyl-D-glutamyl-meso-2,6-diaminopimelyl-D-alanyl-D-alanine:undecaprenyl-phosphate transferase activity"/>
    <property type="evidence" value="ECO:0007669"/>
    <property type="project" value="RHEA"/>
</dbReference>
<dbReference type="GO" id="GO:0051301">
    <property type="term" value="P:cell division"/>
    <property type="evidence" value="ECO:0007669"/>
    <property type="project" value="UniProtKB-KW"/>
</dbReference>
<dbReference type="GO" id="GO:0071555">
    <property type="term" value="P:cell wall organization"/>
    <property type="evidence" value="ECO:0007669"/>
    <property type="project" value="UniProtKB-KW"/>
</dbReference>
<dbReference type="GO" id="GO:0009252">
    <property type="term" value="P:peptidoglycan biosynthetic process"/>
    <property type="evidence" value="ECO:0007669"/>
    <property type="project" value="UniProtKB-UniRule"/>
</dbReference>
<dbReference type="GO" id="GO:0008360">
    <property type="term" value="P:regulation of cell shape"/>
    <property type="evidence" value="ECO:0007669"/>
    <property type="project" value="UniProtKB-KW"/>
</dbReference>
<dbReference type="CDD" id="cd06852">
    <property type="entry name" value="GT_MraY"/>
    <property type="match status" value="1"/>
</dbReference>
<dbReference type="HAMAP" id="MF_00038">
    <property type="entry name" value="MraY"/>
    <property type="match status" value="1"/>
</dbReference>
<dbReference type="InterPro" id="IPR000715">
    <property type="entry name" value="Glycosyl_transferase_4"/>
</dbReference>
<dbReference type="InterPro" id="IPR003524">
    <property type="entry name" value="PNAcMuramoyl-5peptid_Trfase"/>
</dbReference>
<dbReference type="InterPro" id="IPR018480">
    <property type="entry name" value="PNAcMuramoyl-5peptid_Trfase_CS"/>
</dbReference>
<dbReference type="NCBIfam" id="TIGR00445">
    <property type="entry name" value="mraY"/>
    <property type="match status" value="1"/>
</dbReference>
<dbReference type="PANTHER" id="PTHR22926">
    <property type="entry name" value="PHOSPHO-N-ACETYLMURAMOYL-PENTAPEPTIDE-TRANSFERASE"/>
    <property type="match status" value="1"/>
</dbReference>
<dbReference type="PANTHER" id="PTHR22926:SF5">
    <property type="entry name" value="PHOSPHO-N-ACETYLMURAMOYL-PENTAPEPTIDE-TRANSFERASE HOMOLOG"/>
    <property type="match status" value="1"/>
</dbReference>
<dbReference type="Pfam" id="PF00953">
    <property type="entry name" value="Glycos_transf_4"/>
    <property type="match status" value="1"/>
</dbReference>
<dbReference type="Pfam" id="PF10555">
    <property type="entry name" value="MraY_sig1"/>
    <property type="match status" value="1"/>
</dbReference>
<dbReference type="PROSITE" id="PS01347">
    <property type="entry name" value="MRAY_1"/>
    <property type="match status" value="1"/>
</dbReference>
<dbReference type="PROSITE" id="PS01348">
    <property type="entry name" value="MRAY_2"/>
    <property type="match status" value="1"/>
</dbReference>
<feature type="chain" id="PRO_1000057276" description="Phospho-N-acetylmuramoyl-pentapeptide-transferase">
    <location>
        <begin position="1"/>
        <end position="360"/>
    </location>
</feature>
<feature type="topological domain" description="Periplasmic" evidence="1">
    <location>
        <begin position="1"/>
        <end position="25"/>
    </location>
</feature>
<feature type="transmembrane region" description="Helical" evidence="1">
    <location>
        <begin position="26"/>
        <end position="46"/>
    </location>
</feature>
<feature type="topological domain" description="Cytoplasmic" evidence="1">
    <location>
        <begin position="47"/>
        <end position="71"/>
    </location>
</feature>
<feature type="transmembrane region" description="Helical" evidence="1">
    <location>
        <begin position="72"/>
        <end position="92"/>
    </location>
</feature>
<feature type="topological domain" description="Periplasmic" evidence="1">
    <location>
        <position position="93"/>
    </location>
</feature>
<feature type="transmembrane region" description="Helical" evidence="1">
    <location>
        <begin position="94"/>
        <end position="114"/>
    </location>
</feature>
<feature type="topological domain" description="Cytoplasmic" evidence="1">
    <location>
        <begin position="115"/>
        <end position="131"/>
    </location>
</feature>
<feature type="transmembrane region" description="Helical" evidence="1">
    <location>
        <begin position="132"/>
        <end position="152"/>
    </location>
</feature>
<feature type="topological domain" description="Periplasmic" evidence="1">
    <location>
        <begin position="153"/>
        <end position="167"/>
    </location>
</feature>
<feature type="transmembrane region" description="Helical" evidence="1">
    <location>
        <begin position="168"/>
        <end position="188"/>
    </location>
</feature>
<feature type="topological domain" description="Cytoplasmic" evidence="1">
    <location>
        <begin position="189"/>
        <end position="198"/>
    </location>
</feature>
<feature type="transmembrane region" description="Helical" evidence="1">
    <location>
        <begin position="199"/>
        <end position="219"/>
    </location>
</feature>
<feature type="topological domain" description="Periplasmic" evidence="1">
    <location>
        <begin position="220"/>
        <end position="235"/>
    </location>
</feature>
<feature type="transmembrane region" description="Helical" evidence="1">
    <location>
        <begin position="236"/>
        <end position="256"/>
    </location>
</feature>
<feature type="topological domain" description="Cytoplasmic" evidence="1">
    <location>
        <begin position="257"/>
        <end position="262"/>
    </location>
</feature>
<feature type="transmembrane region" description="Helical" evidence="1">
    <location>
        <begin position="263"/>
        <end position="283"/>
    </location>
</feature>
<feature type="topological domain" description="Periplasmic" evidence="1">
    <location>
        <begin position="284"/>
        <end position="287"/>
    </location>
</feature>
<feature type="transmembrane region" description="Helical" evidence="1">
    <location>
        <begin position="288"/>
        <end position="308"/>
    </location>
</feature>
<feature type="topological domain" description="Cytoplasmic" evidence="1">
    <location>
        <begin position="309"/>
        <end position="337"/>
    </location>
</feature>
<feature type="transmembrane region" description="Helical" evidence="1">
    <location>
        <begin position="338"/>
        <end position="358"/>
    </location>
</feature>
<feature type="topological domain" description="Periplasmic" evidence="1">
    <location>
        <begin position="359"/>
        <end position="360"/>
    </location>
</feature>
<evidence type="ECO:0000255" key="1">
    <source>
        <dbReference type="HAMAP-Rule" id="MF_00038"/>
    </source>
</evidence>
<proteinExistence type="inferred from homology"/>
<comment type="function">
    <text evidence="1">Catalyzes the initial step of the lipid cycle reactions in the biosynthesis of the cell wall peptidoglycan: transfers peptidoglycan precursor phospho-MurNAc-pentapeptide from UDP-MurNAc-pentapeptide onto the lipid carrier undecaprenyl phosphate, yielding undecaprenyl-pyrophosphoryl-MurNAc-pentapeptide, known as lipid I.</text>
</comment>
<comment type="catalytic activity">
    <reaction evidence="1">
        <text>UDP-N-acetyl-alpha-D-muramoyl-L-alanyl-gamma-D-glutamyl-meso-2,6-diaminopimeloyl-D-alanyl-D-alanine + di-trans,octa-cis-undecaprenyl phosphate = di-trans,octa-cis-undecaprenyl diphospho-N-acetyl-alpha-D-muramoyl-L-alanyl-D-glutamyl-meso-2,6-diaminopimeloyl-D-alanyl-D-alanine + UMP</text>
        <dbReference type="Rhea" id="RHEA:28386"/>
        <dbReference type="ChEBI" id="CHEBI:57865"/>
        <dbReference type="ChEBI" id="CHEBI:60392"/>
        <dbReference type="ChEBI" id="CHEBI:61386"/>
        <dbReference type="ChEBI" id="CHEBI:61387"/>
        <dbReference type="EC" id="2.7.8.13"/>
    </reaction>
</comment>
<comment type="cofactor">
    <cofactor evidence="1">
        <name>Mg(2+)</name>
        <dbReference type="ChEBI" id="CHEBI:18420"/>
    </cofactor>
</comment>
<comment type="pathway">
    <text evidence="1">Cell wall biogenesis; peptidoglycan biosynthesis.</text>
</comment>
<comment type="subcellular location">
    <subcellularLocation>
        <location evidence="1">Cell inner membrane</location>
        <topology evidence="1">Multi-pass membrane protein</topology>
    </subcellularLocation>
</comment>
<comment type="similarity">
    <text evidence="1">Belongs to the glycosyltransferase 4 family. MraY subfamily.</text>
</comment>
<sequence>MLVWLAEHLVKYYSGFNVFSYLTFRAIVSLLTALFISLWMGPRMIAHLQKLSFGQVVRNDGPESHFSKRGTPTMGGIMILTAIVISVLLWAYPSNPYVWCVLVVLVGYGVIGFVDDYRKVVRKDTKGLIARWKYFWMSVIALGVAFALYLAGKDTPATQLVVPFFKDVMPQLGLFYILLAYFVIVGTGNAVNLTDGLDGLAIMPTVFVAGGFALVAWATGNMNFASYLHIPYLRHAGELVIVCTAIVGAGLGFLWFNTYPAQVFMGDVGSLALGGALGIIAVLLRQEFLLVIMGGVFVVETLSVILQVGSFKLRGQRIFRMAPIHHHYELKGWPEPRVIVRFWIISLMLVLIGLATLKVR</sequence>
<protein>
    <recommendedName>
        <fullName evidence="1">Phospho-N-acetylmuramoyl-pentapeptide-transferase</fullName>
        <ecNumber evidence="1">2.7.8.13</ecNumber>
    </recommendedName>
    <alternativeName>
        <fullName evidence="1">UDP-MurNAc-pentapeptide phosphotransferase</fullName>
    </alternativeName>
</protein>
<gene>
    <name evidence="1" type="primary">mraY</name>
    <name type="ordered locus">EcHS_A0093</name>
</gene>
<organism>
    <name type="scientific">Escherichia coli O9:H4 (strain HS)</name>
    <dbReference type="NCBI Taxonomy" id="331112"/>
    <lineage>
        <taxon>Bacteria</taxon>
        <taxon>Pseudomonadati</taxon>
        <taxon>Pseudomonadota</taxon>
        <taxon>Gammaproteobacteria</taxon>
        <taxon>Enterobacterales</taxon>
        <taxon>Enterobacteriaceae</taxon>
        <taxon>Escherichia</taxon>
    </lineage>
</organism>
<reference key="1">
    <citation type="journal article" date="2008" name="J. Bacteriol.">
        <title>The pangenome structure of Escherichia coli: comparative genomic analysis of E. coli commensal and pathogenic isolates.</title>
        <authorList>
            <person name="Rasko D.A."/>
            <person name="Rosovitz M.J."/>
            <person name="Myers G.S.A."/>
            <person name="Mongodin E.F."/>
            <person name="Fricke W.F."/>
            <person name="Gajer P."/>
            <person name="Crabtree J."/>
            <person name="Sebaihia M."/>
            <person name="Thomson N.R."/>
            <person name="Chaudhuri R."/>
            <person name="Henderson I.R."/>
            <person name="Sperandio V."/>
            <person name="Ravel J."/>
        </authorList>
    </citation>
    <scope>NUCLEOTIDE SEQUENCE [LARGE SCALE GENOMIC DNA]</scope>
    <source>
        <strain>HS</strain>
    </source>
</reference>
<keyword id="KW-0131">Cell cycle</keyword>
<keyword id="KW-0132">Cell division</keyword>
<keyword id="KW-0997">Cell inner membrane</keyword>
<keyword id="KW-1003">Cell membrane</keyword>
<keyword id="KW-0133">Cell shape</keyword>
<keyword id="KW-0961">Cell wall biogenesis/degradation</keyword>
<keyword id="KW-0460">Magnesium</keyword>
<keyword id="KW-0472">Membrane</keyword>
<keyword id="KW-0479">Metal-binding</keyword>
<keyword id="KW-0573">Peptidoglycan synthesis</keyword>
<keyword id="KW-0808">Transferase</keyword>
<keyword id="KW-0812">Transmembrane</keyword>
<keyword id="KW-1133">Transmembrane helix</keyword>